<evidence type="ECO:0000255" key="1"/>
<evidence type="ECO:0000256" key="2">
    <source>
        <dbReference type="SAM" id="MobiDB-lite"/>
    </source>
</evidence>
<evidence type="ECO:0000305" key="3"/>
<accession>Q54MC6</accession>
<gene>
    <name type="primary">lrlA</name>
    <name type="ORF">DDB_G0286037</name>
</gene>
<dbReference type="EMBL" id="AAFI02000085">
    <property type="protein sequence ID" value="EAL64397.1"/>
    <property type="molecule type" value="Genomic_DNA"/>
</dbReference>
<dbReference type="RefSeq" id="XP_637908.1">
    <property type="nucleotide sequence ID" value="XM_632816.1"/>
</dbReference>
<dbReference type="SMR" id="Q54MC6"/>
<dbReference type="STRING" id="44689.Q54MC6"/>
<dbReference type="PaxDb" id="44689-DDB0231831"/>
<dbReference type="EnsemblProtists" id="EAL64397">
    <property type="protein sequence ID" value="EAL64397"/>
    <property type="gene ID" value="DDB_G0286037"/>
</dbReference>
<dbReference type="GeneID" id="8625419"/>
<dbReference type="KEGG" id="ddi:DDB_G0286037"/>
<dbReference type="dictyBase" id="DDB_G0286037">
    <property type="gene designation" value="lrlA"/>
</dbReference>
<dbReference type="VEuPathDB" id="AmoebaDB:DDB_G0286037"/>
<dbReference type="eggNOG" id="KOG4193">
    <property type="taxonomic scope" value="Eukaryota"/>
</dbReference>
<dbReference type="HOGENOM" id="CLU_910384_0_0_1"/>
<dbReference type="InParanoid" id="Q54MC6"/>
<dbReference type="OMA" id="AVWFAFC"/>
<dbReference type="PhylomeDB" id="Q54MC6"/>
<dbReference type="PRO" id="PR:Q54MC6"/>
<dbReference type="Proteomes" id="UP000002195">
    <property type="component" value="Chromosome 4"/>
</dbReference>
<dbReference type="GO" id="GO:0016020">
    <property type="term" value="C:membrane"/>
    <property type="evidence" value="ECO:0007669"/>
    <property type="project" value="UniProtKB-SubCell"/>
</dbReference>
<dbReference type="GO" id="GO:0004930">
    <property type="term" value="F:G protein-coupled receptor activity"/>
    <property type="evidence" value="ECO:0007669"/>
    <property type="project" value="UniProtKB-KW"/>
</dbReference>
<dbReference type="GO" id="GO:0007166">
    <property type="term" value="P:cell surface receptor signaling pathway"/>
    <property type="evidence" value="ECO:0007669"/>
    <property type="project" value="InterPro"/>
</dbReference>
<dbReference type="CDD" id="cd15040">
    <property type="entry name" value="7tmB2_Adhesion"/>
    <property type="match status" value="1"/>
</dbReference>
<dbReference type="Gene3D" id="1.20.1070.10">
    <property type="entry name" value="Rhodopsin 7-helix transmembrane proteins"/>
    <property type="match status" value="1"/>
</dbReference>
<dbReference type="InterPro" id="IPR022343">
    <property type="entry name" value="GCR1-cAMP_receptor"/>
</dbReference>
<dbReference type="InterPro" id="IPR017981">
    <property type="entry name" value="GPCR_2-like_7TM"/>
</dbReference>
<dbReference type="InterPro" id="IPR000832">
    <property type="entry name" value="GPCR_2_secretin-like"/>
</dbReference>
<dbReference type="InterPro" id="IPR022340">
    <property type="entry name" value="GPCR_GCR1_put"/>
</dbReference>
<dbReference type="InterPro" id="IPR053231">
    <property type="entry name" value="GPCR_LN-TM7"/>
</dbReference>
<dbReference type="PANTHER" id="PTHR45902">
    <property type="entry name" value="LATROPHILIN RECEPTOR-LIKE PROTEIN A"/>
    <property type="match status" value="1"/>
</dbReference>
<dbReference type="PANTHER" id="PTHR45902:SF1">
    <property type="entry name" value="LATROPHILIN RECEPTOR-LIKE PROTEIN A"/>
    <property type="match status" value="1"/>
</dbReference>
<dbReference type="Pfam" id="PF00002">
    <property type="entry name" value="7tm_2"/>
    <property type="match status" value="1"/>
</dbReference>
<dbReference type="PRINTS" id="PR02001">
    <property type="entry name" value="GCR1CAMPR"/>
</dbReference>
<dbReference type="PRINTS" id="PR02000">
    <property type="entry name" value="GCR1PLANT"/>
</dbReference>
<dbReference type="SUPFAM" id="SSF81321">
    <property type="entry name" value="Family A G protein-coupled receptor-like"/>
    <property type="match status" value="1"/>
</dbReference>
<dbReference type="PROSITE" id="PS50261">
    <property type="entry name" value="G_PROTEIN_RECEP_F2_4"/>
    <property type="match status" value="1"/>
</dbReference>
<reference key="1">
    <citation type="journal article" date="2005" name="Nature">
        <title>The genome of the social amoeba Dictyostelium discoideum.</title>
        <authorList>
            <person name="Eichinger L."/>
            <person name="Pachebat J.A."/>
            <person name="Gloeckner G."/>
            <person name="Rajandream M.A."/>
            <person name="Sucgang R."/>
            <person name="Berriman M."/>
            <person name="Song J."/>
            <person name="Olsen R."/>
            <person name="Szafranski K."/>
            <person name="Xu Q."/>
            <person name="Tunggal B."/>
            <person name="Kummerfeld S."/>
            <person name="Madera M."/>
            <person name="Konfortov B.A."/>
            <person name="Rivero F."/>
            <person name="Bankier A.T."/>
            <person name="Lehmann R."/>
            <person name="Hamlin N."/>
            <person name="Davies R."/>
            <person name="Gaudet P."/>
            <person name="Fey P."/>
            <person name="Pilcher K."/>
            <person name="Chen G."/>
            <person name="Saunders D."/>
            <person name="Sodergren E.J."/>
            <person name="Davis P."/>
            <person name="Kerhornou A."/>
            <person name="Nie X."/>
            <person name="Hall N."/>
            <person name="Anjard C."/>
            <person name="Hemphill L."/>
            <person name="Bason N."/>
            <person name="Farbrother P."/>
            <person name="Desany B."/>
            <person name="Just E."/>
            <person name="Morio T."/>
            <person name="Rost R."/>
            <person name="Churcher C.M."/>
            <person name="Cooper J."/>
            <person name="Haydock S."/>
            <person name="van Driessche N."/>
            <person name="Cronin A."/>
            <person name="Goodhead I."/>
            <person name="Muzny D.M."/>
            <person name="Mourier T."/>
            <person name="Pain A."/>
            <person name="Lu M."/>
            <person name="Harper D."/>
            <person name="Lindsay R."/>
            <person name="Hauser H."/>
            <person name="James K.D."/>
            <person name="Quiles M."/>
            <person name="Madan Babu M."/>
            <person name="Saito T."/>
            <person name="Buchrieser C."/>
            <person name="Wardroper A."/>
            <person name="Felder M."/>
            <person name="Thangavelu M."/>
            <person name="Johnson D."/>
            <person name="Knights A."/>
            <person name="Loulseged H."/>
            <person name="Mungall K.L."/>
            <person name="Oliver K."/>
            <person name="Price C."/>
            <person name="Quail M.A."/>
            <person name="Urushihara H."/>
            <person name="Hernandez J."/>
            <person name="Rabbinowitsch E."/>
            <person name="Steffen D."/>
            <person name="Sanders M."/>
            <person name="Ma J."/>
            <person name="Kohara Y."/>
            <person name="Sharp S."/>
            <person name="Simmonds M.N."/>
            <person name="Spiegler S."/>
            <person name="Tivey A."/>
            <person name="Sugano S."/>
            <person name="White B."/>
            <person name="Walker D."/>
            <person name="Woodward J.R."/>
            <person name="Winckler T."/>
            <person name="Tanaka Y."/>
            <person name="Shaulsky G."/>
            <person name="Schleicher M."/>
            <person name="Weinstock G.M."/>
            <person name="Rosenthal A."/>
            <person name="Cox E.C."/>
            <person name="Chisholm R.L."/>
            <person name="Gibbs R.A."/>
            <person name="Loomis W.F."/>
            <person name="Platzer M."/>
            <person name="Kay R.R."/>
            <person name="Williams J.G."/>
            <person name="Dear P.H."/>
            <person name="Noegel A.A."/>
            <person name="Barrell B.G."/>
            <person name="Kuspa A."/>
        </authorList>
    </citation>
    <scope>NUCLEOTIDE SEQUENCE [LARGE SCALE GENOMIC DNA]</scope>
    <source>
        <strain>AX4</strain>
    </source>
</reference>
<reference key="2">
    <citation type="journal article" date="2006" name="Eur. J. Cell Biol.">
        <title>The Dictyostelium repertoire of seven transmembrane domain receptors.</title>
        <authorList>
            <person name="Prabhu Y."/>
            <person name="Eichinger L."/>
        </authorList>
    </citation>
    <scope>NOMENCLATURE</scope>
</reference>
<feature type="chain" id="PRO_0000371380" description="Latrophilin receptor-like protein A">
    <location>
        <begin position="1"/>
        <end position="306"/>
    </location>
</feature>
<feature type="topological domain" description="Extracellular" evidence="1">
    <location>
        <begin position="1"/>
        <end position="15"/>
    </location>
</feature>
<feature type="transmembrane region" description="Helical; Name=1" evidence="1">
    <location>
        <begin position="16"/>
        <end position="36"/>
    </location>
</feature>
<feature type="topological domain" description="Cytoplasmic" evidence="1">
    <location>
        <begin position="37"/>
        <end position="41"/>
    </location>
</feature>
<feature type="transmembrane region" description="Helical; Name=2" evidence="1">
    <location>
        <begin position="42"/>
        <end position="62"/>
    </location>
</feature>
<feature type="topological domain" description="Extracellular" evidence="1">
    <location>
        <begin position="63"/>
        <end position="70"/>
    </location>
</feature>
<feature type="transmembrane region" description="Helical; Name=3" evidence="1">
    <location>
        <begin position="71"/>
        <end position="91"/>
    </location>
</feature>
<feature type="topological domain" description="Cytoplasmic" evidence="1">
    <location>
        <begin position="92"/>
        <end position="113"/>
    </location>
</feature>
<feature type="transmembrane region" description="Helical; Name=4" evidence="1">
    <location>
        <begin position="114"/>
        <end position="134"/>
    </location>
</feature>
<feature type="topological domain" description="Extracellular" evidence="1">
    <location>
        <begin position="135"/>
        <end position="152"/>
    </location>
</feature>
<feature type="transmembrane region" description="Helical; Name=5" evidence="1">
    <location>
        <begin position="153"/>
        <end position="173"/>
    </location>
</feature>
<feature type="topological domain" description="Cytoplasmic" evidence="1">
    <location>
        <begin position="174"/>
        <end position="196"/>
    </location>
</feature>
<feature type="transmembrane region" description="Helical; Name=6" evidence="1">
    <location>
        <begin position="197"/>
        <end position="217"/>
    </location>
</feature>
<feature type="topological domain" description="Extracellular" evidence="1">
    <location>
        <begin position="218"/>
        <end position="222"/>
    </location>
</feature>
<feature type="transmembrane region" description="Helical; Name=7" evidence="1">
    <location>
        <begin position="223"/>
        <end position="243"/>
    </location>
</feature>
<feature type="topological domain" description="Cytoplasmic" evidence="1">
    <location>
        <begin position="244"/>
        <end position="306"/>
    </location>
</feature>
<feature type="region of interest" description="Disordered" evidence="2">
    <location>
        <begin position="279"/>
        <end position="306"/>
    </location>
</feature>
<comment type="subcellular location">
    <subcellularLocation>
        <location evidence="3">Membrane</location>
        <topology evidence="3">Multi-pass membrane protein</topology>
    </subcellularLocation>
</comment>
<comment type="similarity">
    <text evidence="3">Belongs to the G-protein coupled receptor 2 family. LN-TM7 subfamily.</text>
</comment>
<protein>
    <recommendedName>
        <fullName>Latrophilin receptor-like protein A</fullName>
    </recommendedName>
</protein>
<proteinExistence type="inferred from homology"/>
<organism>
    <name type="scientific">Dictyostelium discoideum</name>
    <name type="common">Social amoeba</name>
    <dbReference type="NCBI Taxonomy" id="44689"/>
    <lineage>
        <taxon>Eukaryota</taxon>
        <taxon>Amoebozoa</taxon>
        <taxon>Evosea</taxon>
        <taxon>Eumycetozoa</taxon>
        <taxon>Dictyostelia</taxon>
        <taxon>Dictyosteliales</taxon>
        <taxon>Dictyosteliaceae</taxon>
        <taxon>Dictyostelium</taxon>
    </lineage>
</organism>
<name>LRLA_DICDI</name>
<keyword id="KW-0297">G-protein coupled receptor</keyword>
<keyword id="KW-0472">Membrane</keyword>
<keyword id="KW-0675">Receptor</keyword>
<keyword id="KW-1185">Reference proteome</keyword>
<keyword id="KW-0807">Transducer</keyword>
<keyword id="KW-0812">Transmembrane</keyword>
<keyword id="KW-1133">Transmembrane helix</keyword>
<sequence>MPSQLLNTVLSYLTDILLSLSIVGSFLTIFTFMLYPKLRSYPIKLIIYLCMSIVFSLFFFEISFRSSNSLFCIPAAILVHYFFLANFFWTFSVSFNFFQMIVKRNRDSEFYERYYHLISWGIPFIIIIFCAAFKKYVDRGGFCYLEDQYSVYFGFFMPGVIIVCSNICIYVFVAKEIYKTLRHTPTQKRQTVKEFRVYFSIFVSIGSSWIFGFIYMFSDSNSIIGYIFLILFSISTSLQGFFIFISYCLNYKVFAHYSRSFTQYGVSFFKRWENLDGETTQSGPTGTTDSSSTMTSTTTTTNVYSA</sequence>